<dbReference type="EMBL" id="X02966">
    <property type="protein sequence ID" value="CAA26710.2"/>
    <property type="molecule type" value="Genomic_DNA"/>
</dbReference>
<dbReference type="PIR" id="A24403">
    <property type="entry name" value="UMMS"/>
</dbReference>
<dbReference type="SMR" id="P08399"/>
<dbReference type="iPTMnet" id="P08399"/>
<dbReference type="PhosphoSitePlus" id="P08399"/>
<dbReference type="jPOST" id="P08399"/>
<dbReference type="PeptideAtlas" id="P08399"/>
<dbReference type="ProteomicsDB" id="301817"/>
<dbReference type="AGR" id="MGI:104521"/>
<dbReference type="MGI" id="MGI:104521">
    <property type="gene designation" value="Phxr5"/>
</dbReference>
<dbReference type="InParanoid" id="P08399"/>
<dbReference type="Proteomes" id="UP000000589">
    <property type="component" value="Unplaced"/>
</dbReference>
<dbReference type="RNAct" id="P08399">
    <property type="molecule type" value="protein"/>
</dbReference>
<dbReference type="FunFam" id="2.10.25.10:FF:000032">
    <property type="entry name" value="signal peptide, CUB and EGF-like domain-containing protein 2 isoform X1"/>
    <property type="match status" value="1"/>
</dbReference>
<dbReference type="Gene3D" id="2.10.25.10">
    <property type="entry name" value="Laminin"/>
    <property type="match status" value="1"/>
</dbReference>
<dbReference type="InterPro" id="IPR052258">
    <property type="entry name" value="Diverse_Func_Domain-Protein"/>
</dbReference>
<dbReference type="PANTHER" id="PTHR37612">
    <property type="entry name" value="FIBROIN HEAVY CHAIN FIB-H LIKE PROTEIN"/>
    <property type="match status" value="1"/>
</dbReference>
<dbReference type="PANTHER" id="PTHR37612:SF20">
    <property type="entry name" value="PER-HEXAMER REPEAT PROTEIN 5-RELATED"/>
    <property type="match status" value="1"/>
</dbReference>
<dbReference type="SUPFAM" id="SSF57196">
    <property type="entry name" value="EGF/Laminin"/>
    <property type="match status" value="1"/>
</dbReference>
<keyword id="KW-1185">Reference proteome</keyword>
<proteinExistence type="uncertain"/>
<feature type="chain" id="PRO_0000058415" description="Putative per-hexamer repeat protein 5">
    <location>
        <begin position="1"/>
        <end position="672"/>
    </location>
</feature>
<feature type="region of interest" description="Disordered" evidence="1">
    <location>
        <begin position="141"/>
        <end position="193"/>
    </location>
</feature>
<feature type="region of interest" description="Disordered" evidence="1">
    <location>
        <begin position="213"/>
        <end position="672"/>
    </location>
</feature>
<feature type="compositionally biased region" description="Gly residues" evidence="1">
    <location>
        <begin position="141"/>
        <end position="161"/>
    </location>
</feature>
<feature type="compositionally biased region" description="Gly residues" evidence="1">
    <location>
        <begin position="171"/>
        <end position="191"/>
    </location>
</feature>
<feature type="compositionally biased region" description="Gly residues" evidence="1">
    <location>
        <begin position="215"/>
        <end position="233"/>
    </location>
</feature>
<feature type="compositionally biased region" description="Gly residues" evidence="1">
    <location>
        <begin position="243"/>
        <end position="263"/>
    </location>
</feature>
<feature type="compositionally biased region" description="Gly residues" evidence="1">
    <location>
        <begin position="273"/>
        <end position="295"/>
    </location>
</feature>
<feature type="compositionally biased region" description="Gly residues" evidence="1">
    <location>
        <begin position="303"/>
        <end position="355"/>
    </location>
</feature>
<feature type="compositionally biased region" description="Gly residues" evidence="1">
    <location>
        <begin position="365"/>
        <end position="389"/>
    </location>
</feature>
<feature type="compositionally biased region" description="Low complexity" evidence="1">
    <location>
        <begin position="390"/>
        <end position="424"/>
    </location>
</feature>
<feature type="compositionally biased region" description="Gly residues" evidence="1">
    <location>
        <begin position="425"/>
        <end position="469"/>
    </location>
</feature>
<feature type="compositionally biased region" description="Low complexity" evidence="1">
    <location>
        <begin position="470"/>
        <end position="486"/>
    </location>
</feature>
<feature type="compositionally biased region" description="Gly residues" evidence="1">
    <location>
        <begin position="487"/>
        <end position="537"/>
    </location>
</feature>
<feature type="compositionally biased region" description="Low complexity" evidence="1">
    <location>
        <begin position="538"/>
        <end position="552"/>
    </location>
</feature>
<feature type="compositionally biased region" description="Gly residues" evidence="1">
    <location>
        <begin position="553"/>
        <end position="617"/>
    </location>
</feature>
<feature type="compositionally biased region" description="Low complexity" evidence="1">
    <location>
        <begin position="618"/>
        <end position="636"/>
    </location>
</feature>
<feature type="compositionally biased region" description="Gly residues" evidence="1">
    <location>
        <begin position="637"/>
        <end position="653"/>
    </location>
</feature>
<feature type="compositionally biased region" description="Gly residues" evidence="1">
    <location>
        <begin position="663"/>
        <end position="672"/>
    </location>
</feature>
<protein>
    <recommendedName>
        <fullName>Putative per-hexamer repeat protein 5</fullName>
    </recommendedName>
</protein>
<sequence length="672" mass="57923">MNKDHGCGHICKEAPRGSVACECRPGFELAKNQKDCICKYELSISEVGTAYTEVRKTTTGTATGIATGTCTGTGRVKATGRGTGTDTDTGTVTARATVTARVTGTGTGTATVTETGTAKVTDTGTGTGTAKVTGTAKVTGTGTGTGTGTGTGTGTGTGTGTGTAKVTGTGTDRGTGTGTGTGTGTGTGTGTGTAKVTGTAKVTGTGTGTAKVTGTGTGTGTGTGTGTGTGTDTGTGTAKVTGTGTGTGTGTGTGTGTGTGTGTGTAKVTGTGTDRGTGTGTGTGTGTGTGTGTGTGTAKVTGTGTGTGTGTGTGTGTGTGTGTGTGTGTGSGSGTGTGTGTGSGSGTGTGTGSGSGTAKVTGTATGTGTGTDTGTGTGTGTGTGTGSGSGTAKVTGTATTTATVTETGTAKVTGTDTGTAKVTGTGTGTGTGTGTGTGTGTGTGTGTGTGTGTGTGTGTGTGTGTGSGSGTAKVTGTDTGTAKVTGTGTGTGTGTGTGTGTGTGTGTGTGSGSGSGSGSGSGSGTGTGTGLGSGSGSGTAKVTGTGTAKVTGTGTGTGTGTGSGSGSGSGSGSGSGSGSGSGSGTGTGTGLGSGSGSGSGTGTGTGTGTGTGTGTGTGTSTVTVRGTGTGTATATGTGTGTGTGTGTGTGTGTGTDTSTGTDRGTGTGTGTA</sequence>
<reference key="1">
    <citation type="journal article" date="1985" name="Nature">
        <title>An unusual coding sequence from a Drosophila clock gene is conserved in vertebrates.</title>
        <authorList>
            <person name="Shin H.S."/>
            <person name="Bargiello T.A."/>
            <person name="Clark B.T."/>
            <person name="Jackson F.R."/>
            <person name="Young M.W."/>
        </authorList>
    </citation>
    <scope>NUCLEOTIDE SEQUENCE [GENOMIC DNA]</scope>
</reference>
<comment type="caution">
    <text evidence="2">Product of a dubious gene prediction.</text>
</comment>
<name>PHXR5_MOUSE</name>
<organism>
    <name type="scientific">Mus musculus</name>
    <name type="common">Mouse</name>
    <dbReference type="NCBI Taxonomy" id="10090"/>
    <lineage>
        <taxon>Eukaryota</taxon>
        <taxon>Metazoa</taxon>
        <taxon>Chordata</taxon>
        <taxon>Craniata</taxon>
        <taxon>Vertebrata</taxon>
        <taxon>Euteleostomi</taxon>
        <taxon>Mammalia</taxon>
        <taxon>Eutheria</taxon>
        <taxon>Euarchontoglires</taxon>
        <taxon>Glires</taxon>
        <taxon>Rodentia</taxon>
        <taxon>Myomorpha</taxon>
        <taxon>Muroidea</taxon>
        <taxon>Muridae</taxon>
        <taxon>Murinae</taxon>
        <taxon>Mus</taxon>
        <taxon>Mus</taxon>
    </lineage>
</organism>
<gene>
    <name type="primary">Phxr5</name>
    <name type="synonym">Per</name>
</gene>
<accession>P08399</accession>
<evidence type="ECO:0000256" key="1">
    <source>
        <dbReference type="SAM" id="MobiDB-lite"/>
    </source>
</evidence>
<evidence type="ECO:0000305" key="2"/>